<proteinExistence type="inferred from homology"/>
<keyword id="KW-0249">Electron transport</keyword>
<keyword id="KW-0472">Membrane</keyword>
<keyword id="KW-0496">Mitochondrion</keyword>
<keyword id="KW-0999">Mitochondrion inner membrane</keyword>
<keyword id="KW-0520">NAD</keyword>
<keyword id="KW-0560">Oxidoreductase</keyword>
<keyword id="KW-0679">Respiratory chain</keyword>
<keyword id="KW-0691">RNA editing</keyword>
<keyword id="KW-1278">Translocase</keyword>
<keyword id="KW-0813">Transport</keyword>
<keyword id="KW-0830">Ubiquinone</keyword>
<organism>
    <name type="scientific">Patellifolia webbiana</name>
    <name type="common">Patellaria webbiana</name>
    <name type="synonym">Beta webbiana</name>
    <dbReference type="NCBI Taxonomy" id="35923"/>
    <lineage>
        <taxon>Eukaryota</taxon>
        <taxon>Viridiplantae</taxon>
        <taxon>Streptophyta</taxon>
        <taxon>Embryophyta</taxon>
        <taxon>Tracheophyta</taxon>
        <taxon>Spermatophyta</taxon>
        <taxon>Magnoliopsida</taxon>
        <taxon>eudicotyledons</taxon>
        <taxon>Gunneridae</taxon>
        <taxon>Pentapetalae</taxon>
        <taxon>Caryophyllales</taxon>
        <taxon>Chenopodiaceae</taxon>
        <taxon>Betoideae</taxon>
        <taxon>Patellifolia</taxon>
    </lineage>
</organism>
<geneLocation type="mitochondrion"/>
<reference key="1">
    <citation type="journal article" date="1995" name="Curr. Genet.">
        <title>The chloroplast trnP-trnW-petG gene cluster in the mitochondrial genomes of Beta vulgaris, B. trigyna and B. webbiana: evolutionary aspects.</title>
        <authorList>
            <person name="Kubo T."/>
            <person name="Yanai Y."/>
            <person name="Kinoshita T."/>
            <person name="Mikami T."/>
        </authorList>
    </citation>
    <scope>NUCLEOTIDE SEQUENCE [GENOMIC DNA]</scope>
    <source>
        <strain>cv. WB11</strain>
        <tissue>Leaf</tissue>
    </source>
</reference>
<name>NDUS3_PATWE</name>
<accession>Q34011</accession>
<protein>
    <recommendedName>
        <fullName>NADH dehydrogenase [ubiquinone] iron-sulfur protein 3</fullName>
        <ecNumber>7.1.1.2</ecNumber>
    </recommendedName>
    <alternativeName>
        <fullName>NADH dehydrogenase subunit 9</fullName>
    </alternativeName>
</protein>
<dbReference type="EC" id="7.1.1.2"/>
<dbReference type="EMBL" id="D38018">
    <property type="protein sequence ID" value="BAA07215.1"/>
    <property type="status" value="ALT_SEQ"/>
    <property type="molecule type" value="Genomic_DNA"/>
</dbReference>
<dbReference type="SMR" id="Q34011"/>
<dbReference type="GO" id="GO:0005743">
    <property type="term" value="C:mitochondrial inner membrane"/>
    <property type="evidence" value="ECO:0007669"/>
    <property type="project" value="UniProtKB-SubCell"/>
</dbReference>
<dbReference type="GO" id="GO:0008137">
    <property type="term" value="F:NADH dehydrogenase (ubiquinone) activity"/>
    <property type="evidence" value="ECO:0007669"/>
    <property type="project" value="UniProtKB-EC"/>
</dbReference>
<dbReference type="FunFam" id="3.30.460.80:FF:000005">
    <property type="entry name" value="NADH dehydrogenase subunit 9"/>
    <property type="match status" value="1"/>
</dbReference>
<dbReference type="Gene3D" id="3.30.460.80">
    <property type="entry name" value="NADH:ubiquinone oxidoreductase, 30kDa subunit"/>
    <property type="match status" value="1"/>
</dbReference>
<dbReference type="HAMAP" id="MF_01357">
    <property type="entry name" value="NDH1_NuoC"/>
    <property type="match status" value="1"/>
</dbReference>
<dbReference type="InterPro" id="IPR010218">
    <property type="entry name" value="NADH_DH_suC"/>
</dbReference>
<dbReference type="InterPro" id="IPR037232">
    <property type="entry name" value="NADH_quin_OxRdtase_su_C/D-like"/>
</dbReference>
<dbReference type="InterPro" id="IPR001268">
    <property type="entry name" value="NADH_UbQ_OxRdtase_30kDa_su"/>
</dbReference>
<dbReference type="InterPro" id="IPR020396">
    <property type="entry name" value="NADH_UbQ_OxRdtase_CS"/>
</dbReference>
<dbReference type="NCBIfam" id="TIGR01961">
    <property type="entry name" value="NuoC_fam"/>
    <property type="match status" value="1"/>
</dbReference>
<dbReference type="NCBIfam" id="NF004733">
    <property type="entry name" value="PRK06074.1-5"/>
    <property type="match status" value="1"/>
</dbReference>
<dbReference type="PANTHER" id="PTHR10884:SF14">
    <property type="entry name" value="NADH DEHYDROGENASE [UBIQUINONE] IRON-SULFUR PROTEIN 3, MITOCHONDRIAL"/>
    <property type="match status" value="1"/>
</dbReference>
<dbReference type="PANTHER" id="PTHR10884">
    <property type="entry name" value="NADH DEHYDROGENASE UBIQUINONE IRON-SULFUR PROTEIN 3"/>
    <property type="match status" value="1"/>
</dbReference>
<dbReference type="Pfam" id="PF00329">
    <property type="entry name" value="Complex1_30kDa"/>
    <property type="match status" value="1"/>
</dbReference>
<dbReference type="SUPFAM" id="SSF143243">
    <property type="entry name" value="Nqo5-like"/>
    <property type="match status" value="1"/>
</dbReference>
<dbReference type="PROSITE" id="PS00542">
    <property type="entry name" value="COMPLEX1_30K"/>
    <property type="match status" value="1"/>
</dbReference>
<evidence type="ECO:0000250" key="1"/>
<evidence type="ECO:0000305" key="2"/>
<gene>
    <name type="primary">NAD9</name>
</gene>
<sequence>MDNQFIFKYSWETLPKKWVKKIEKSEHGNRFDTNTDYLFQLLCFLKLHTYTRFQVLIDICGVDYPSRKRRFEVVYNLLSTRYNSRIRLQTSADEVTRISSVVRLFPSAGWWEREVWDMFGVSFINHPDLRRILTDYGFEGHPLRKDFPLSGYVEVRYDDPEKRVVSEPIEMTQEFRYFDFASPWEQRNGNEG</sequence>
<feature type="chain" id="PRO_0000118640" description="NADH dehydrogenase [ubiquinone] iron-sulfur protein 3">
    <location>
        <begin position="1"/>
        <end position="192"/>
    </location>
</feature>
<comment type="function">
    <text evidence="1">Core subunit of the mitochondrial membrane respiratory chain NADH dehydrogenase (Complex I) that is believed to belong to the minimal assembly required for catalysis. Complex I functions in the transfer of electrons from NADH to the respiratory chain. The immediate electron acceptor for the enzyme is believed to be ubiquinone (By similarity).</text>
</comment>
<comment type="catalytic activity">
    <reaction>
        <text>a ubiquinone + NADH + 5 H(+)(in) = a ubiquinol + NAD(+) + 4 H(+)(out)</text>
        <dbReference type="Rhea" id="RHEA:29091"/>
        <dbReference type="Rhea" id="RHEA-COMP:9565"/>
        <dbReference type="Rhea" id="RHEA-COMP:9566"/>
        <dbReference type="ChEBI" id="CHEBI:15378"/>
        <dbReference type="ChEBI" id="CHEBI:16389"/>
        <dbReference type="ChEBI" id="CHEBI:17976"/>
        <dbReference type="ChEBI" id="CHEBI:57540"/>
        <dbReference type="ChEBI" id="CHEBI:57945"/>
        <dbReference type="EC" id="7.1.1.2"/>
    </reaction>
</comment>
<comment type="subunit">
    <text evidence="1">Complex I is composed of about 45 different subunits. This is a component of the iron-sulfur (IP) fragment of the enzyme (By similarity).</text>
</comment>
<comment type="subcellular location">
    <subcellularLocation>
        <location>Mitochondrion inner membrane</location>
        <topology>Peripheral membrane protein</topology>
        <orientation>Matrix side</orientation>
    </subcellularLocation>
</comment>
<comment type="RNA editing">
    <location>
        <position position="31" evidence="1"/>
    </location>
    <location>
        <position position="38" evidence="1"/>
    </location>
    <location>
        <position position="100" evidence="1"/>
    </location>
    <location>
        <position position="110" evidence="1"/>
    </location>
    <location>
        <position position="123" evidence="1"/>
    </location>
</comment>
<comment type="similarity">
    <text evidence="2">Belongs to the complex I 30 kDa subunit family.</text>
</comment>